<comment type="function">
    <text evidence="1">The RecF protein is involved in DNA metabolism; it is required for DNA replication and normal SOS inducibility. RecF binds preferentially to single-stranded, linear DNA. It also seems to bind ATP.</text>
</comment>
<comment type="subcellular location">
    <subcellularLocation>
        <location evidence="1">Cytoplasm</location>
    </subcellularLocation>
</comment>
<comment type="similarity">
    <text evidence="1">Belongs to the RecF family.</text>
</comment>
<sequence length="360" mass="41512">MKNIFLHSLSLENYRNFKNLELKTDNTPIILIGENGSGKTNILEAISLFYPGRGLRSAKLANVCKTSEDHCLVKALLQSKLGLAEFTTQFKRSSNRRITEYNESKIANNELSKFTSMVWLTPHMEGIFTSGSNDRRKFLDRIVYNFDPKHAELVSKYEYYMHERNKILVEDIRDDNWLKIIEEKMADISNHIANNRLKTLEFMQQAIDDLENEFPKADLSIDGIVEQKILNGKENIVSFITAELYQTRSKDKLLGRTSFGVHKSDFLVKHQKKNILAKFCSTGEQKAILIAIILAEMNYAIKLTKIAPILLLDEVFVHLDDKRRQYLIEFLTGLNMQLWVTTTNLEGIENFANKAQLIKL</sequence>
<reference key="1">
    <citation type="journal article" date="2008" name="Infect. Immun.">
        <title>Genomic comparison of virulent Rickettsia rickettsii Sheila Smith and avirulent Rickettsia rickettsii Iowa.</title>
        <authorList>
            <person name="Ellison D.W."/>
            <person name="Clark T.R."/>
            <person name="Sturdevant D.E."/>
            <person name="Virtaneva K."/>
            <person name="Porcella S.F."/>
            <person name="Hackstadt T."/>
        </authorList>
    </citation>
    <scope>NUCLEOTIDE SEQUENCE [LARGE SCALE GENOMIC DNA]</scope>
    <source>
        <strain>Iowa</strain>
    </source>
</reference>
<protein>
    <recommendedName>
        <fullName evidence="1">DNA replication and repair protein RecF</fullName>
    </recommendedName>
</protein>
<dbReference type="EMBL" id="CP000766">
    <property type="protein sequence ID" value="ABY71974.1"/>
    <property type="molecule type" value="Genomic_DNA"/>
</dbReference>
<dbReference type="RefSeq" id="WP_012150261.1">
    <property type="nucleotide sequence ID" value="NC_010263.3"/>
</dbReference>
<dbReference type="SMR" id="B0BVU8"/>
<dbReference type="GeneID" id="79936845"/>
<dbReference type="KEGG" id="rrj:RrIowa_0044"/>
<dbReference type="eggNOG" id="COG1195">
    <property type="taxonomic scope" value="Bacteria"/>
</dbReference>
<dbReference type="HOGENOM" id="CLU_040267_2_0_5"/>
<dbReference type="Proteomes" id="UP000000796">
    <property type="component" value="Chromosome"/>
</dbReference>
<dbReference type="GO" id="GO:0005737">
    <property type="term" value="C:cytoplasm"/>
    <property type="evidence" value="ECO:0007669"/>
    <property type="project" value="UniProtKB-SubCell"/>
</dbReference>
<dbReference type="GO" id="GO:0005524">
    <property type="term" value="F:ATP binding"/>
    <property type="evidence" value="ECO:0007669"/>
    <property type="project" value="UniProtKB-UniRule"/>
</dbReference>
<dbReference type="GO" id="GO:0003697">
    <property type="term" value="F:single-stranded DNA binding"/>
    <property type="evidence" value="ECO:0007669"/>
    <property type="project" value="UniProtKB-UniRule"/>
</dbReference>
<dbReference type="GO" id="GO:0006260">
    <property type="term" value="P:DNA replication"/>
    <property type="evidence" value="ECO:0007669"/>
    <property type="project" value="UniProtKB-UniRule"/>
</dbReference>
<dbReference type="GO" id="GO:0000731">
    <property type="term" value="P:DNA synthesis involved in DNA repair"/>
    <property type="evidence" value="ECO:0007669"/>
    <property type="project" value="TreeGrafter"/>
</dbReference>
<dbReference type="GO" id="GO:0006302">
    <property type="term" value="P:double-strand break repair"/>
    <property type="evidence" value="ECO:0007669"/>
    <property type="project" value="TreeGrafter"/>
</dbReference>
<dbReference type="GO" id="GO:0009432">
    <property type="term" value="P:SOS response"/>
    <property type="evidence" value="ECO:0007669"/>
    <property type="project" value="UniProtKB-UniRule"/>
</dbReference>
<dbReference type="Gene3D" id="3.40.50.300">
    <property type="entry name" value="P-loop containing nucleotide triphosphate hydrolases"/>
    <property type="match status" value="1"/>
</dbReference>
<dbReference type="Gene3D" id="1.20.1050.90">
    <property type="entry name" value="RecF/RecN/SMC, N-terminal domain"/>
    <property type="match status" value="1"/>
</dbReference>
<dbReference type="HAMAP" id="MF_00365">
    <property type="entry name" value="RecF"/>
    <property type="match status" value="1"/>
</dbReference>
<dbReference type="InterPro" id="IPR001238">
    <property type="entry name" value="DNA-binding_RecF"/>
</dbReference>
<dbReference type="InterPro" id="IPR018078">
    <property type="entry name" value="DNA-binding_RecF_CS"/>
</dbReference>
<dbReference type="InterPro" id="IPR027417">
    <property type="entry name" value="P-loop_NTPase"/>
</dbReference>
<dbReference type="InterPro" id="IPR003395">
    <property type="entry name" value="RecF/RecN/SMC_N"/>
</dbReference>
<dbReference type="InterPro" id="IPR042174">
    <property type="entry name" value="RecF_2"/>
</dbReference>
<dbReference type="NCBIfam" id="TIGR00611">
    <property type="entry name" value="recf"/>
    <property type="match status" value="1"/>
</dbReference>
<dbReference type="PANTHER" id="PTHR32182">
    <property type="entry name" value="DNA REPLICATION AND REPAIR PROTEIN RECF"/>
    <property type="match status" value="1"/>
</dbReference>
<dbReference type="PANTHER" id="PTHR32182:SF0">
    <property type="entry name" value="DNA REPLICATION AND REPAIR PROTEIN RECF"/>
    <property type="match status" value="1"/>
</dbReference>
<dbReference type="Pfam" id="PF02463">
    <property type="entry name" value="SMC_N"/>
    <property type="match status" value="1"/>
</dbReference>
<dbReference type="SUPFAM" id="SSF52540">
    <property type="entry name" value="P-loop containing nucleoside triphosphate hydrolases"/>
    <property type="match status" value="1"/>
</dbReference>
<dbReference type="PROSITE" id="PS00617">
    <property type="entry name" value="RECF_1"/>
    <property type="match status" value="1"/>
</dbReference>
<dbReference type="PROSITE" id="PS00618">
    <property type="entry name" value="RECF_2"/>
    <property type="match status" value="1"/>
</dbReference>
<keyword id="KW-0067">ATP-binding</keyword>
<keyword id="KW-0963">Cytoplasm</keyword>
<keyword id="KW-0227">DNA damage</keyword>
<keyword id="KW-0234">DNA repair</keyword>
<keyword id="KW-0235">DNA replication</keyword>
<keyword id="KW-0238">DNA-binding</keyword>
<keyword id="KW-0547">Nucleotide-binding</keyword>
<keyword id="KW-0742">SOS response</keyword>
<gene>
    <name evidence="1" type="primary">recF</name>
    <name type="ordered locus">RrIowa_0044</name>
</gene>
<proteinExistence type="inferred from homology"/>
<organism>
    <name type="scientific">Rickettsia rickettsii (strain Iowa)</name>
    <dbReference type="NCBI Taxonomy" id="452659"/>
    <lineage>
        <taxon>Bacteria</taxon>
        <taxon>Pseudomonadati</taxon>
        <taxon>Pseudomonadota</taxon>
        <taxon>Alphaproteobacteria</taxon>
        <taxon>Rickettsiales</taxon>
        <taxon>Rickettsiaceae</taxon>
        <taxon>Rickettsieae</taxon>
        <taxon>Rickettsia</taxon>
        <taxon>spotted fever group</taxon>
    </lineage>
</organism>
<feature type="chain" id="PRO_1000079598" description="DNA replication and repair protein RecF">
    <location>
        <begin position="1"/>
        <end position="360"/>
    </location>
</feature>
<feature type="binding site" evidence="1">
    <location>
        <begin position="33"/>
        <end position="40"/>
    </location>
    <ligand>
        <name>ATP</name>
        <dbReference type="ChEBI" id="CHEBI:30616"/>
    </ligand>
</feature>
<name>RECF_RICRO</name>
<accession>B0BVU8</accession>
<evidence type="ECO:0000255" key="1">
    <source>
        <dbReference type="HAMAP-Rule" id="MF_00365"/>
    </source>
</evidence>